<name>ACP_GEOSM</name>
<comment type="function">
    <text evidence="1">Carrier of the growing fatty acid chain in fatty acid biosynthesis.</text>
</comment>
<comment type="pathway">
    <text evidence="1">Lipid metabolism; fatty acid biosynthesis.</text>
</comment>
<comment type="subcellular location">
    <subcellularLocation>
        <location evidence="1">Cytoplasm</location>
    </subcellularLocation>
</comment>
<comment type="PTM">
    <text evidence="1">4'-phosphopantetheine is transferred from CoA to a specific serine of apo-ACP by AcpS. This modification is essential for activity because fatty acids are bound in thioester linkage to the sulfhydryl of the prosthetic group.</text>
</comment>
<comment type="similarity">
    <text evidence="1">Belongs to the acyl carrier protein (ACP) family.</text>
</comment>
<evidence type="ECO:0000255" key="1">
    <source>
        <dbReference type="HAMAP-Rule" id="MF_01217"/>
    </source>
</evidence>
<evidence type="ECO:0000255" key="2">
    <source>
        <dbReference type="PROSITE-ProRule" id="PRU00258"/>
    </source>
</evidence>
<proteinExistence type="inferred from homology"/>
<sequence>MASIEKRIKEIVAEQLGVDEAQVTNESSFMDDLGADSLDTVELVMALEEEFEIEISDEDAEKIQSVQDAIDYITDHT</sequence>
<organism>
    <name type="scientific">Geobacter sp. (strain M21)</name>
    <dbReference type="NCBI Taxonomy" id="443144"/>
    <lineage>
        <taxon>Bacteria</taxon>
        <taxon>Pseudomonadati</taxon>
        <taxon>Thermodesulfobacteriota</taxon>
        <taxon>Desulfuromonadia</taxon>
        <taxon>Geobacterales</taxon>
        <taxon>Geobacteraceae</taxon>
        <taxon>Geobacter</taxon>
    </lineage>
</organism>
<keyword id="KW-0963">Cytoplasm</keyword>
<keyword id="KW-0275">Fatty acid biosynthesis</keyword>
<keyword id="KW-0276">Fatty acid metabolism</keyword>
<keyword id="KW-0444">Lipid biosynthesis</keyword>
<keyword id="KW-0443">Lipid metabolism</keyword>
<keyword id="KW-0596">Phosphopantetheine</keyword>
<keyword id="KW-0597">Phosphoprotein</keyword>
<feature type="chain" id="PRO_1000213911" description="Acyl carrier protein">
    <location>
        <begin position="1"/>
        <end position="77"/>
    </location>
</feature>
<feature type="domain" description="Carrier" evidence="2">
    <location>
        <begin position="2"/>
        <end position="77"/>
    </location>
</feature>
<feature type="modified residue" description="O-(pantetheine 4'-phosphoryl)serine" evidence="2">
    <location>
        <position position="37"/>
    </location>
</feature>
<gene>
    <name evidence="1" type="primary">acpP</name>
    <name type="ordered locus">GM21_1157</name>
</gene>
<accession>C6E345</accession>
<dbReference type="EMBL" id="CP001661">
    <property type="protein sequence ID" value="ACT17218.1"/>
    <property type="molecule type" value="Genomic_DNA"/>
</dbReference>
<dbReference type="SMR" id="C6E345"/>
<dbReference type="STRING" id="443144.GM21_1157"/>
<dbReference type="KEGG" id="gem:GM21_1157"/>
<dbReference type="eggNOG" id="COG0236">
    <property type="taxonomic scope" value="Bacteria"/>
</dbReference>
<dbReference type="HOGENOM" id="CLU_108696_5_1_7"/>
<dbReference type="OrthoDB" id="9804551at2"/>
<dbReference type="UniPathway" id="UPA00094"/>
<dbReference type="GO" id="GO:0005829">
    <property type="term" value="C:cytosol"/>
    <property type="evidence" value="ECO:0007669"/>
    <property type="project" value="TreeGrafter"/>
</dbReference>
<dbReference type="GO" id="GO:0016020">
    <property type="term" value="C:membrane"/>
    <property type="evidence" value="ECO:0007669"/>
    <property type="project" value="GOC"/>
</dbReference>
<dbReference type="GO" id="GO:0000035">
    <property type="term" value="F:acyl binding"/>
    <property type="evidence" value="ECO:0007669"/>
    <property type="project" value="TreeGrafter"/>
</dbReference>
<dbReference type="GO" id="GO:0000036">
    <property type="term" value="F:acyl carrier activity"/>
    <property type="evidence" value="ECO:0007669"/>
    <property type="project" value="UniProtKB-UniRule"/>
</dbReference>
<dbReference type="GO" id="GO:0009245">
    <property type="term" value="P:lipid A biosynthetic process"/>
    <property type="evidence" value="ECO:0007669"/>
    <property type="project" value="TreeGrafter"/>
</dbReference>
<dbReference type="FunFam" id="1.10.1200.10:FF:000001">
    <property type="entry name" value="Acyl carrier protein"/>
    <property type="match status" value="1"/>
</dbReference>
<dbReference type="Gene3D" id="1.10.1200.10">
    <property type="entry name" value="ACP-like"/>
    <property type="match status" value="1"/>
</dbReference>
<dbReference type="HAMAP" id="MF_01217">
    <property type="entry name" value="Acyl_carrier"/>
    <property type="match status" value="1"/>
</dbReference>
<dbReference type="InterPro" id="IPR003231">
    <property type="entry name" value="ACP"/>
</dbReference>
<dbReference type="InterPro" id="IPR036736">
    <property type="entry name" value="ACP-like_sf"/>
</dbReference>
<dbReference type="InterPro" id="IPR009081">
    <property type="entry name" value="PP-bd_ACP"/>
</dbReference>
<dbReference type="InterPro" id="IPR006162">
    <property type="entry name" value="Ppantetheine_attach_site"/>
</dbReference>
<dbReference type="NCBIfam" id="TIGR00517">
    <property type="entry name" value="acyl_carrier"/>
    <property type="match status" value="1"/>
</dbReference>
<dbReference type="NCBIfam" id="NF002148">
    <property type="entry name" value="PRK00982.1-2"/>
    <property type="match status" value="1"/>
</dbReference>
<dbReference type="NCBIfam" id="NF002149">
    <property type="entry name" value="PRK00982.1-3"/>
    <property type="match status" value="1"/>
</dbReference>
<dbReference type="NCBIfam" id="NF002150">
    <property type="entry name" value="PRK00982.1-4"/>
    <property type="match status" value="1"/>
</dbReference>
<dbReference type="NCBIfam" id="NF002151">
    <property type="entry name" value="PRK00982.1-5"/>
    <property type="match status" value="1"/>
</dbReference>
<dbReference type="PANTHER" id="PTHR20863">
    <property type="entry name" value="ACYL CARRIER PROTEIN"/>
    <property type="match status" value="1"/>
</dbReference>
<dbReference type="PANTHER" id="PTHR20863:SF76">
    <property type="entry name" value="CARRIER DOMAIN-CONTAINING PROTEIN"/>
    <property type="match status" value="1"/>
</dbReference>
<dbReference type="Pfam" id="PF00550">
    <property type="entry name" value="PP-binding"/>
    <property type="match status" value="1"/>
</dbReference>
<dbReference type="SUPFAM" id="SSF47336">
    <property type="entry name" value="ACP-like"/>
    <property type="match status" value="1"/>
</dbReference>
<dbReference type="PROSITE" id="PS50075">
    <property type="entry name" value="CARRIER"/>
    <property type="match status" value="1"/>
</dbReference>
<dbReference type="PROSITE" id="PS00012">
    <property type="entry name" value="PHOSPHOPANTETHEINE"/>
    <property type="match status" value="1"/>
</dbReference>
<reference key="1">
    <citation type="submission" date="2009-07" db="EMBL/GenBank/DDBJ databases">
        <title>Complete sequence of Geobacter sp. M21.</title>
        <authorList>
            <consortium name="US DOE Joint Genome Institute"/>
            <person name="Lucas S."/>
            <person name="Copeland A."/>
            <person name="Lapidus A."/>
            <person name="Glavina del Rio T."/>
            <person name="Dalin E."/>
            <person name="Tice H."/>
            <person name="Bruce D."/>
            <person name="Goodwin L."/>
            <person name="Pitluck S."/>
            <person name="Saunders E."/>
            <person name="Brettin T."/>
            <person name="Detter J.C."/>
            <person name="Han C."/>
            <person name="Larimer F."/>
            <person name="Land M."/>
            <person name="Hauser L."/>
            <person name="Kyrpides N."/>
            <person name="Ovchinnikova G."/>
            <person name="Lovley D."/>
        </authorList>
    </citation>
    <scope>NUCLEOTIDE SEQUENCE [LARGE SCALE GENOMIC DNA]</scope>
    <source>
        <strain>M21</strain>
    </source>
</reference>
<protein>
    <recommendedName>
        <fullName evidence="1">Acyl carrier protein</fullName>
        <shortName evidence="1">ACP</shortName>
    </recommendedName>
</protein>